<sequence>MEVTVIGAGLAGSEAAWQLAKRGIRVKLYEMRPVKQTPAHHTDKFAELVCSNSLRANTLTNAVGVLKEEMRRLDSVIMKAADSCSVPAGGALAVDRHEFAAKVTQMVTNHPNVTVVREEVTSIPTGPTIIATGPLTSQPLSEQLQALTGEEYLYFYDAAAPIVEKESIDMEKVYIKSRYDKGEAAYINCPMTEEEFERFYDALISAETVPLKEFEKEIYFEGCMPIEVMARRGKKTLLFGPMKPVGLEDPRTGKRPFAVVQLRQDDAAGTLYNIVGFQTHLKWGAQKEVIRFIPGLEQAEIVRYGVMHRNTFINSPKLLKPTYQYKEREDLFFAGQMTGVEGYVESAASGLVAGINAAHYVLGKELVVFPQETAIGSMAHYITSANPKHFQPMNANFGLFAPLDEMIKDKKKKNERYAERALETIQNFLKKL</sequence>
<gene>
    <name evidence="1" type="primary">trmFO</name>
    <name type="ordered locus">Aflv_1749</name>
</gene>
<proteinExistence type="inferred from homology"/>
<evidence type="ECO:0000255" key="1">
    <source>
        <dbReference type="HAMAP-Rule" id="MF_01037"/>
    </source>
</evidence>
<organism>
    <name type="scientific">Anoxybacillus flavithermus (strain DSM 21510 / WK1)</name>
    <dbReference type="NCBI Taxonomy" id="491915"/>
    <lineage>
        <taxon>Bacteria</taxon>
        <taxon>Bacillati</taxon>
        <taxon>Bacillota</taxon>
        <taxon>Bacilli</taxon>
        <taxon>Bacillales</taxon>
        <taxon>Anoxybacillaceae</taxon>
        <taxon>Anoxybacillus</taxon>
    </lineage>
</organism>
<reference key="1">
    <citation type="journal article" date="2008" name="Genome Biol.">
        <title>Encapsulated in silica: genome, proteome and physiology of the thermophilic bacterium Anoxybacillus flavithermus WK1.</title>
        <authorList>
            <person name="Saw J.H."/>
            <person name="Mountain B.W."/>
            <person name="Feng L."/>
            <person name="Omelchenko M.V."/>
            <person name="Hou S."/>
            <person name="Saito J.A."/>
            <person name="Stott M.B."/>
            <person name="Li D."/>
            <person name="Zhao G."/>
            <person name="Wu J."/>
            <person name="Galperin M.Y."/>
            <person name="Koonin E.V."/>
            <person name="Makarova K.S."/>
            <person name="Wolf Y.I."/>
            <person name="Rigden D.J."/>
            <person name="Dunfield P.F."/>
            <person name="Wang L."/>
            <person name="Alam M."/>
        </authorList>
    </citation>
    <scope>NUCLEOTIDE SEQUENCE [LARGE SCALE GENOMIC DNA]</scope>
    <source>
        <strain>DSM 21510 / WK1</strain>
    </source>
</reference>
<comment type="function">
    <text evidence="1">Catalyzes the folate-dependent formation of 5-methyl-uridine at position 54 (M-5-U54) in all tRNAs.</text>
</comment>
<comment type="catalytic activity">
    <reaction evidence="1">
        <text>uridine(54) in tRNA + (6R)-5,10-methylene-5,6,7,8-tetrahydrofolate + NADH + H(+) = 5-methyluridine(54) in tRNA + (6S)-5,6,7,8-tetrahydrofolate + NAD(+)</text>
        <dbReference type="Rhea" id="RHEA:16873"/>
        <dbReference type="Rhea" id="RHEA-COMP:10167"/>
        <dbReference type="Rhea" id="RHEA-COMP:10193"/>
        <dbReference type="ChEBI" id="CHEBI:15378"/>
        <dbReference type="ChEBI" id="CHEBI:15636"/>
        <dbReference type="ChEBI" id="CHEBI:57453"/>
        <dbReference type="ChEBI" id="CHEBI:57540"/>
        <dbReference type="ChEBI" id="CHEBI:57945"/>
        <dbReference type="ChEBI" id="CHEBI:65315"/>
        <dbReference type="ChEBI" id="CHEBI:74447"/>
        <dbReference type="EC" id="2.1.1.74"/>
    </reaction>
</comment>
<comment type="catalytic activity">
    <reaction evidence="1">
        <text>uridine(54) in tRNA + (6R)-5,10-methylene-5,6,7,8-tetrahydrofolate + NADPH + H(+) = 5-methyluridine(54) in tRNA + (6S)-5,6,7,8-tetrahydrofolate + NADP(+)</text>
        <dbReference type="Rhea" id="RHEA:62372"/>
        <dbReference type="Rhea" id="RHEA-COMP:10167"/>
        <dbReference type="Rhea" id="RHEA-COMP:10193"/>
        <dbReference type="ChEBI" id="CHEBI:15378"/>
        <dbReference type="ChEBI" id="CHEBI:15636"/>
        <dbReference type="ChEBI" id="CHEBI:57453"/>
        <dbReference type="ChEBI" id="CHEBI:57783"/>
        <dbReference type="ChEBI" id="CHEBI:58349"/>
        <dbReference type="ChEBI" id="CHEBI:65315"/>
        <dbReference type="ChEBI" id="CHEBI:74447"/>
        <dbReference type="EC" id="2.1.1.74"/>
    </reaction>
</comment>
<comment type="cofactor">
    <cofactor evidence="1">
        <name>FAD</name>
        <dbReference type="ChEBI" id="CHEBI:57692"/>
    </cofactor>
</comment>
<comment type="subcellular location">
    <subcellularLocation>
        <location evidence="1">Cytoplasm</location>
    </subcellularLocation>
</comment>
<comment type="similarity">
    <text evidence="1">Belongs to the MnmG family. TrmFO subfamily.</text>
</comment>
<keyword id="KW-0963">Cytoplasm</keyword>
<keyword id="KW-0274">FAD</keyword>
<keyword id="KW-0285">Flavoprotein</keyword>
<keyword id="KW-0489">Methyltransferase</keyword>
<keyword id="KW-0520">NAD</keyword>
<keyword id="KW-0521">NADP</keyword>
<keyword id="KW-0808">Transferase</keyword>
<keyword id="KW-0819">tRNA processing</keyword>
<dbReference type="EC" id="2.1.1.74" evidence="1"/>
<dbReference type="EMBL" id="CP000922">
    <property type="protein sequence ID" value="ACJ34110.1"/>
    <property type="molecule type" value="Genomic_DNA"/>
</dbReference>
<dbReference type="RefSeq" id="WP_012575316.1">
    <property type="nucleotide sequence ID" value="NC_011567.1"/>
</dbReference>
<dbReference type="SMR" id="B7GGC8"/>
<dbReference type="STRING" id="491915.Aflv_1749"/>
<dbReference type="GeneID" id="7038002"/>
<dbReference type="KEGG" id="afl:Aflv_1749"/>
<dbReference type="PATRIC" id="fig|491915.6.peg.1798"/>
<dbReference type="eggNOG" id="COG1206">
    <property type="taxonomic scope" value="Bacteria"/>
</dbReference>
<dbReference type="HOGENOM" id="CLU_033057_1_0_9"/>
<dbReference type="Proteomes" id="UP000000742">
    <property type="component" value="Chromosome"/>
</dbReference>
<dbReference type="GO" id="GO:0005829">
    <property type="term" value="C:cytosol"/>
    <property type="evidence" value="ECO:0007669"/>
    <property type="project" value="TreeGrafter"/>
</dbReference>
<dbReference type="GO" id="GO:0050660">
    <property type="term" value="F:flavin adenine dinucleotide binding"/>
    <property type="evidence" value="ECO:0007669"/>
    <property type="project" value="UniProtKB-UniRule"/>
</dbReference>
<dbReference type="GO" id="GO:0047151">
    <property type="term" value="F:tRNA (uracil(54)-C5)-methyltransferase activity, 5,10-methylenetetrahydrofolate-dependent"/>
    <property type="evidence" value="ECO:0007669"/>
    <property type="project" value="UniProtKB-UniRule"/>
</dbReference>
<dbReference type="GO" id="GO:0030488">
    <property type="term" value="P:tRNA methylation"/>
    <property type="evidence" value="ECO:0007669"/>
    <property type="project" value="TreeGrafter"/>
</dbReference>
<dbReference type="GO" id="GO:0002098">
    <property type="term" value="P:tRNA wobble uridine modification"/>
    <property type="evidence" value="ECO:0007669"/>
    <property type="project" value="TreeGrafter"/>
</dbReference>
<dbReference type="FunFam" id="3.50.50.60:FF:000035">
    <property type="entry name" value="Methylenetetrahydrofolate--tRNA-(uracil-5-)-methyltransferase TrmFO"/>
    <property type="match status" value="1"/>
</dbReference>
<dbReference type="FunFam" id="3.50.50.60:FF:000040">
    <property type="entry name" value="Methylenetetrahydrofolate--tRNA-(uracil-5-)-methyltransferase TrmFO"/>
    <property type="match status" value="1"/>
</dbReference>
<dbReference type="Gene3D" id="3.50.50.60">
    <property type="entry name" value="FAD/NAD(P)-binding domain"/>
    <property type="match status" value="2"/>
</dbReference>
<dbReference type="HAMAP" id="MF_01037">
    <property type="entry name" value="TrmFO"/>
    <property type="match status" value="1"/>
</dbReference>
<dbReference type="InterPro" id="IPR036188">
    <property type="entry name" value="FAD/NAD-bd_sf"/>
</dbReference>
<dbReference type="InterPro" id="IPR002218">
    <property type="entry name" value="MnmG-rel"/>
</dbReference>
<dbReference type="InterPro" id="IPR020595">
    <property type="entry name" value="MnmG-rel_CS"/>
</dbReference>
<dbReference type="InterPro" id="IPR040131">
    <property type="entry name" value="MnmG_N"/>
</dbReference>
<dbReference type="InterPro" id="IPR004417">
    <property type="entry name" value="TrmFO"/>
</dbReference>
<dbReference type="NCBIfam" id="TIGR00137">
    <property type="entry name" value="gid_trmFO"/>
    <property type="match status" value="1"/>
</dbReference>
<dbReference type="NCBIfam" id="NF003739">
    <property type="entry name" value="PRK05335.1"/>
    <property type="match status" value="1"/>
</dbReference>
<dbReference type="PANTHER" id="PTHR11806">
    <property type="entry name" value="GLUCOSE INHIBITED DIVISION PROTEIN A"/>
    <property type="match status" value="1"/>
</dbReference>
<dbReference type="PANTHER" id="PTHR11806:SF2">
    <property type="entry name" value="METHYLENETETRAHYDROFOLATE--TRNA-(URACIL-5-)-METHYLTRANSFERASE TRMFO"/>
    <property type="match status" value="1"/>
</dbReference>
<dbReference type="Pfam" id="PF01134">
    <property type="entry name" value="GIDA"/>
    <property type="match status" value="1"/>
</dbReference>
<dbReference type="SUPFAM" id="SSF51905">
    <property type="entry name" value="FAD/NAD(P)-binding domain"/>
    <property type="match status" value="1"/>
</dbReference>
<dbReference type="PROSITE" id="PS01281">
    <property type="entry name" value="GIDA_2"/>
    <property type="match status" value="1"/>
</dbReference>
<protein>
    <recommendedName>
        <fullName evidence="1">Methylenetetrahydrofolate--tRNA-(uracil-5-)-methyltransferase TrmFO</fullName>
        <ecNumber evidence="1">2.1.1.74</ecNumber>
    </recommendedName>
    <alternativeName>
        <fullName evidence="1">Folate-dependent tRNA (uracil-5-)-methyltransferase</fullName>
    </alternativeName>
    <alternativeName>
        <fullName evidence="1">Folate-dependent tRNA(M-5-U54)-methyltransferase</fullName>
    </alternativeName>
</protein>
<feature type="chain" id="PRO_1000213380" description="Methylenetetrahydrofolate--tRNA-(uracil-5-)-methyltransferase TrmFO">
    <location>
        <begin position="1"/>
        <end position="432"/>
    </location>
</feature>
<feature type="binding site" evidence="1">
    <location>
        <begin position="7"/>
        <end position="12"/>
    </location>
    <ligand>
        <name>FAD</name>
        <dbReference type="ChEBI" id="CHEBI:57692"/>
    </ligand>
</feature>
<name>TRMFO_ANOFW</name>
<accession>B7GGC8</accession>